<name>YBH0_YEAST</name>
<comment type="subcellular location">
    <subcellularLocation>
        <location evidence="2">Membrane</location>
        <topology evidence="2">Multi-pass membrane protein</topology>
    </subcellularLocation>
</comment>
<comment type="miscellaneous">
    <text evidence="2">Partially overlaps AST1.</text>
</comment>
<comment type="caution">
    <text evidence="3">Product of a dubious gene prediction unlikely to encode a functional protein. Because of that it is not part of the S.cerevisiae S288c complete/reference proteome set.</text>
</comment>
<protein>
    <recommendedName>
        <fullName>Putative uncharacterized protein YBL070C</fullName>
    </recommendedName>
</protein>
<proteinExistence type="uncertain"/>
<gene>
    <name type="ordered locus">YBL070C</name>
    <name type="ORF">YBL0616</name>
</gene>
<dbReference type="EMBL" id="Z35831">
    <property type="protein sequence ID" value="CAA84890.1"/>
    <property type="molecule type" value="Genomic_DNA"/>
</dbReference>
<dbReference type="PIR" id="S45806">
    <property type="entry name" value="S45806"/>
</dbReference>
<dbReference type="STRING" id="4932.YBL070C"/>
<dbReference type="PaxDb" id="4932-YBL070C"/>
<dbReference type="EnsemblFungi" id="YBL070C_mRNA">
    <property type="protein sequence ID" value="YBL070C"/>
    <property type="gene ID" value="YBL070C"/>
</dbReference>
<dbReference type="AGR" id="SGD:S000000166"/>
<dbReference type="SGD" id="S000000166">
    <property type="gene designation" value="YBL070C"/>
</dbReference>
<dbReference type="HOGENOM" id="CLU_2225275_0_0_1"/>
<dbReference type="GO" id="GO:0016020">
    <property type="term" value="C:membrane"/>
    <property type="evidence" value="ECO:0007669"/>
    <property type="project" value="UniProtKB-SubCell"/>
</dbReference>
<accession>P38186</accession>
<feature type="chain" id="PRO_0000202451" description="Putative uncharacterized protein YBL070C">
    <location>
        <begin position="1"/>
        <end position="106"/>
    </location>
</feature>
<feature type="transmembrane region" description="Helical" evidence="1">
    <location>
        <begin position="43"/>
        <end position="63"/>
    </location>
</feature>
<feature type="transmembrane region" description="Helical" evidence="1">
    <location>
        <begin position="86"/>
        <end position="106"/>
    </location>
</feature>
<reference key="1">
    <citation type="journal article" date="1994" name="EMBO J.">
        <title>Complete DNA sequence of yeast chromosome II.</title>
        <authorList>
            <person name="Feldmann H."/>
            <person name="Aigle M."/>
            <person name="Aljinovic G."/>
            <person name="Andre B."/>
            <person name="Baclet M.C."/>
            <person name="Barthe C."/>
            <person name="Baur A."/>
            <person name="Becam A.-M."/>
            <person name="Biteau N."/>
            <person name="Boles E."/>
            <person name="Brandt T."/>
            <person name="Brendel M."/>
            <person name="Brueckner M."/>
            <person name="Bussereau F."/>
            <person name="Christiansen C."/>
            <person name="Contreras R."/>
            <person name="Crouzet M."/>
            <person name="Cziepluch C."/>
            <person name="Demolis N."/>
            <person name="Delaveau T."/>
            <person name="Doignon F."/>
            <person name="Domdey H."/>
            <person name="Duesterhus S."/>
            <person name="Dubois E."/>
            <person name="Dujon B."/>
            <person name="El Bakkoury M."/>
            <person name="Entian K.-D."/>
            <person name="Feuermann M."/>
            <person name="Fiers W."/>
            <person name="Fobo G.M."/>
            <person name="Fritz C."/>
            <person name="Gassenhuber J."/>
            <person name="Glansdorff N."/>
            <person name="Goffeau A."/>
            <person name="Grivell L.A."/>
            <person name="de Haan M."/>
            <person name="Hein C."/>
            <person name="Herbert C.J."/>
            <person name="Hollenberg C.P."/>
            <person name="Holmstroem K."/>
            <person name="Jacq C."/>
            <person name="Jacquet M."/>
            <person name="Jauniaux J.-C."/>
            <person name="Jonniaux J.-L."/>
            <person name="Kallesoee T."/>
            <person name="Kiesau P."/>
            <person name="Kirchrath L."/>
            <person name="Koetter P."/>
            <person name="Korol S."/>
            <person name="Liebl S."/>
            <person name="Logghe M."/>
            <person name="Lohan A.J.E."/>
            <person name="Louis E.J."/>
            <person name="Li Z.Y."/>
            <person name="Maat M.J."/>
            <person name="Mallet L."/>
            <person name="Mannhaupt G."/>
            <person name="Messenguy F."/>
            <person name="Miosga T."/>
            <person name="Molemans F."/>
            <person name="Mueller S."/>
            <person name="Nasr F."/>
            <person name="Obermaier B."/>
            <person name="Perea J."/>
            <person name="Pierard A."/>
            <person name="Piravandi E."/>
            <person name="Pohl F.M."/>
            <person name="Pohl T.M."/>
            <person name="Potier S."/>
            <person name="Proft M."/>
            <person name="Purnelle B."/>
            <person name="Ramezani Rad M."/>
            <person name="Rieger M."/>
            <person name="Rose M."/>
            <person name="Schaaff-Gerstenschlaeger I."/>
            <person name="Scherens B."/>
            <person name="Schwarzlose C."/>
            <person name="Skala J."/>
            <person name="Slonimski P.P."/>
            <person name="Smits P.H.M."/>
            <person name="Souciet J.-L."/>
            <person name="Steensma H.Y."/>
            <person name="Stucka R."/>
            <person name="Urrestarazu L.A."/>
            <person name="van der Aart Q.J.M."/>
            <person name="Van Dyck L."/>
            <person name="Vassarotti A."/>
            <person name="Vetter I."/>
            <person name="Vierendeels F."/>
            <person name="Vissers S."/>
            <person name="Wagner G."/>
            <person name="de Wergifosse P."/>
            <person name="Wolfe K.H."/>
            <person name="Zagulski M."/>
            <person name="Zimmermann F.K."/>
            <person name="Mewes H.-W."/>
            <person name="Kleine K."/>
        </authorList>
    </citation>
    <scope>NUCLEOTIDE SEQUENCE [LARGE SCALE GENOMIC DNA]</scope>
    <source>
        <strain>ATCC 204508 / S288c</strain>
    </source>
</reference>
<reference key="2">
    <citation type="journal article" date="2014" name="G3 (Bethesda)">
        <title>The reference genome sequence of Saccharomyces cerevisiae: Then and now.</title>
        <authorList>
            <person name="Engel S.R."/>
            <person name="Dietrich F.S."/>
            <person name="Fisk D.G."/>
            <person name="Binkley G."/>
            <person name="Balakrishnan R."/>
            <person name="Costanzo M.C."/>
            <person name="Dwight S.S."/>
            <person name="Hitz B.C."/>
            <person name="Karra K."/>
            <person name="Nash R.S."/>
            <person name="Weng S."/>
            <person name="Wong E.D."/>
            <person name="Lloyd P."/>
            <person name="Skrzypek M.S."/>
            <person name="Miyasato S.R."/>
            <person name="Simison M."/>
            <person name="Cherry J.M."/>
        </authorList>
    </citation>
    <scope>GENOME REANNOTATION</scope>
    <source>
        <strain>ATCC 204508 / S288c</strain>
    </source>
</reference>
<organism>
    <name type="scientific">Saccharomyces cerevisiae (strain ATCC 204508 / S288c)</name>
    <name type="common">Baker's yeast</name>
    <dbReference type="NCBI Taxonomy" id="559292"/>
    <lineage>
        <taxon>Eukaryota</taxon>
        <taxon>Fungi</taxon>
        <taxon>Dikarya</taxon>
        <taxon>Ascomycota</taxon>
        <taxon>Saccharomycotina</taxon>
        <taxon>Saccharomycetes</taxon>
        <taxon>Saccharomycetales</taxon>
        <taxon>Saccharomycetaceae</taxon>
        <taxon>Saccharomyces</taxon>
    </lineage>
</organism>
<evidence type="ECO:0000255" key="1"/>
<evidence type="ECO:0000305" key="2"/>
<evidence type="ECO:0000305" key="3">
    <source>
    </source>
</evidence>
<keyword id="KW-0472">Membrane</keyword>
<keyword id="KW-0812">Transmembrane</keyword>
<keyword id="KW-1133">Transmembrane helix</keyword>
<sequence length="106" mass="11547">MGPVLVWNISDLIGMNFTCLKGLATLFKTGASIGISLGAGAECSTIIACNLGSWFFKISLAIVQRLPLGMQCRICSFRNARQGGNIPELALIIICTFIYFLYFSLF</sequence>